<keyword id="KW-0413">Isomerase</keyword>
<keyword id="KW-1185">Reference proteome</keyword>
<keyword id="KW-0819">tRNA processing</keyword>
<reference key="1">
    <citation type="journal article" date="2000" name="Nature">
        <title>Genome sequence of the endocellular bacterial symbiont of aphids Buchnera sp. APS.</title>
        <authorList>
            <person name="Shigenobu S."/>
            <person name="Watanabe H."/>
            <person name="Hattori M."/>
            <person name="Sakaki Y."/>
            <person name="Ishikawa H."/>
        </authorList>
    </citation>
    <scope>NUCLEOTIDE SEQUENCE [LARGE SCALE GENOMIC DNA]</scope>
    <source>
        <strain>APS</strain>
    </source>
</reference>
<sequence>MFFHKKRDVHGLLLLDKPQGISSNNALQKVKMLFSAKKAGYIGTLDPLATGMLPICFGECSKFSHYLMESNKKYHVIAKLGEKTSTSDSDGIIIKKRPILINSFKIKSALKELTGLIEQIPPMYSAIKHNGVPLYKYARQGLNIKRSIRKVLIHDISSIHQEKNLIEFKIFCSKGTYVRTLVEDLGEKLGCGAHVIFLRRLEMASYLHSQLVTISYLHKLLRKEKNNNFNFFEKIDNLLMPIDSPVSFLPKVYLFPQQSYNFQLGQTVIFFSDIKNSLVRVIALENNKFIGLGRINTEELLIPYRLVSRSIN</sequence>
<dbReference type="EC" id="5.4.99.25" evidence="1"/>
<dbReference type="EMBL" id="BA000003">
    <property type="protein sequence ID" value="BAB13079.1"/>
    <property type="molecule type" value="Genomic_DNA"/>
</dbReference>
<dbReference type="RefSeq" id="NP_240193.1">
    <property type="nucleotide sequence ID" value="NC_002528.1"/>
</dbReference>
<dbReference type="RefSeq" id="WP_009874333.1">
    <property type="nucleotide sequence ID" value="NC_002528.1"/>
</dbReference>
<dbReference type="SMR" id="P57456"/>
<dbReference type="STRING" id="563178.BUAP5A_368"/>
<dbReference type="EnsemblBacteria" id="BAB13079">
    <property type="protein sequence ID" value="BAB13079"/>
    <property type="gene ID" value="BAB13079"/>
</dbReference>
<dbReference type="KEGG" id="buc:BU375"/>
<dbReference type="PATRIC" id="fig|107806.10.peg.389"/>
<dbReference type="eggNOG" id="COG0130">
    <property type="taxonomic scope" value="Bacteria"/>
</dbReference>
<dbReference type="HOGENOM" id="CLU_032087_0_3_6"/>
<dbReference type="Proteomes" id="UP000001806">
    <property type="component" value="Chromosome"/>
</dbReference>
<dbReference type="GO" id="GO:0003723">
    <property type="term" value="F:RNA binding"/>
    <property type="evidence" value="ECO:0007669"/>
    <property type="project" value="InterPro"/>
</dbReference>
<dbReference type="GO" id="GO:0160148">
    <property type="term" value="F:tRNA pseudouridine(55) synthase activity"/>
    <property type="evidence" value="ECO:0007669"/>
    <property type="project" value="UniProtKB-EC"/>
</dbReference>
<dbReference type="GO" id="GO:1990481">
    <property type="term" value="P:mRNA pseudouridine synthesis"/>
    <property type="evidence" value="ECO:0007669"/>
    <property type="project" value="TreeGrafter"/>
</dbReference>
<dbReference type="GO" id="GO:0031119">
    <property type="term" value="P:tRNA pseudouridine synthesis"/>
    <property type="evidence" value="ECO:0007669"/>
    <property type="project" value="UniProtKB-UniRule"/>
</dbReference>
<dbReference type="CDD" id="cd02573">
    <property type="entry name" value="PseudoU_synth_EcTruB"/>
    <property type="match status" value="1"/>
</dbReference>
<dbReference type="CDD" id="cd21152">
    <property type="entry name" value="PUA_TruB_bacterial"/>
    <property type="match status" value="1"/>
</dbReference>
<dbReference type="Gene3D" id="3.30.2350.10">
    <property type="entry name" value="Pseudouridine synthase"/>
    <property type="match status" value="1"/>
</dbReference>
<dbReference type="Gene3D" id="2.30.130.10">
    <property type="entry name" value="PUA domain"/>
    <property type="match status" value="1"/>
</dbReference>
<dbReference type="HAMAP" id="MF_01080">
    <property type="entry name" value="TruB_bact"/>
    <property type="match status" value="1"/>
</dbReference>
<dbReference type="InterPro" id="IPR020103">
    <property type="entry name" value="PsdUridine_synth_cat_dom_sf"/>
</dbReference>
<dbReference type="InterPro" id="IPR002501">
    <property type="entry name" value="PsdUridine_synth_N"/>
</dbReference>
<dbReference type="InterPro" id="IPR015947">
    <property type="entry name" value="PUA-like_sf"/>
</dbReference>
<dbReference type="InterPro" id="IPR036974">
    <property type="entry name" value="PUA_sf"/>
</dbReference>
<dbReference type="InterPro" id="IPR014780">
    <property type="entry name" value="tRNA_psdUridine_synth_TruB"/>
</dbReference>
<dbReference type="InterPro" id="IPR015240">
    <property type="entry name" value="tRNA_sdUridine_synth_fam1_C"/>
</dbReference>
<dbReference type="InterPro" id="IPR032819">
    <property type="entry name" value="TruB_C"/>
</dbReference>
<dbReference type="NCBIfam" id="TIGR00431">
    <property type="entry name" value="TruB"/>
    <property type="match status" value="1"/>
</dbReference>
<dbReference type="PANTHER" id="PTHR13767:SF2">
    <property type="entry name" value="PSEUDOURIDYLATE SYNTHASE TRUB1"/>
    <property type="match status" value="1"/>
</dbReference>
<dbReference type="PANTHER" id="PTHR13767">
    <property type="entry name" value="TRNA-PSEUDOURIDINE SYNTHASE"/>
    <property type="match status" value="1"/>
</dbReference>
<dbReference type="Pfam" id="PF09157">
    <property type="entry name" value="TruB-C_2"/>
    <property type="match status" value="1"/>
</dbReference>
<dbReference type="Pfam" id="PF16198">
    <property type="entry name" value="TruB_C_2"/>
    <property type="match status" value="1"/>
</dbReference>
<dbReference type="Pfam" id="PF01509">
    <property type="entry name" value="TruB_N"/>
    <property type="match status" value="1"/>
</dbReference>
<dbReference type="SUPFAM" id="SSF55120">
    <property type="entry name" value="Pseudouridine synthase"/>
    <property type="match status" value="1"/>
</dbReference>
<dbReference type="SUPFAM" id="SSF88697">
    <property type="entry name" value="PUA domain-like"/>
    <property type="match status" value="1"/>
</dbReference>
<proteinExistence type="inferred from homology"/>
<protein>
    <recommendedName>
        <fullName evidence="1">tRNA pseudouridine synthase B</fullName>
        <ecNumber evidence="1">5.4.99.25</ecNumber>
    </recommendedName>
    <alternativeName>
        <fullName evidence="1">tRNA pseudouridine(55) synthase</fullName>
        <shortName evidence="1">Psi55 synthase</shortName>
    </alternativeName>
    <alternativeName>
        <fullName evidence="1">tRNA pseudouridylate synthase</fullName>
    </alternativeName>
    <alternativeName>
        <fullName evidence="1">tRNA-uridine isomerase</fullName>
    </alternativeName>
</protein>
<feature type="chain" id="PRO_0000121806" description="tRNA pseudouridine synthase B">
    <location>
        <begin position="1"/>
        <end position="312"/>
    </location>
</feature>
<feature type="active site" description="Nucleophile" evidence="1">
    <location>
        <position position="46"/>
    </location>
</feature>
<feature type="binding site" evidence="1">
    <location>
        <position position="74"/>
    </location>
    <ligand>
        <name>substrate</name>
    </ligand>
</feature>
<feature type="binding site" evidence="1">
    <location>
        <position position="177"/>
    </location>
    <ligand>
        <name>substrate</name>
    </ligand>
</feature>
<feature type="binding site" evidence="1">
    <location>
        <position position="198"/>
    </location>
    <ligand>
        <name>substrate</name>
    </ligand>
</feature>
<accession>P57456</accession>
<name>TRUB_BUCAI</name>
<evidence type="ECO:0000255" key="1">
    <source>
        <dbReference type="HAMAP-Rule" id="MF_01080"/>
    </source>
</evidence>
<gene>
    <name evidence="1" type="primary">truB</name>
    <name type="ordered locus">BU375</name>
</gene>
<organism>
    <name type="scientific">Buchnera aphidicola subsp. Acyrthosiphon pisum (strain APS)</name>
    <name type="common">Acyrthosiphon pisum symbiotic bacterium</name>
    <dbReference type="NCBI Taxonomy" id="107806"/>
    <lineage>
        <taxon>Bacteria</taxon>
        <taxon>Pseudomonadati</taxon>
        <taxon>Pseudomonadota</taxon>
        <taxon>Gammaproteobacteria</taxon>
        <taxon>Enterobacterales</taxon>
        <taxon>Erwiniaceae</taxon>
        <taxon>Buchnera</taxon>
    </lineage>
</organism>
<comment type="function">
    <text evidence="1">Responsible for synthesis of pseudouridine from uracil-55 in the psi GC loop of transfer RNAs.</text>
</comment>
<comment type="catalytic activity">
    <reaction evidence="1">
        <text>uridine(55) in tRNA = pseudouridine(55) in tRNA</text>
        <dbReference type="Rhea" id="RHEA:42532"/>
        <dbReference type="Rhea" id="RHEA-COMP:10101"/>
        <dbReference type="Rhea" id="RHEA-COMP:10102"/>
        <dbReference type="ChEBI" id="CHEBI:65314"/>
        <dbReference type="ChEBI" id="CHEBI:65315"/>
        <dbReference type="EC" id="5.4.99.25"/>
    </reaction>
</comment>
<comment type="similarity">
    <text evidence="1">Belongs to the pseudouridine synthase TruB family. Type 1 subfamily.</text>
</comment>